<feature type="chain" id="PRO_0000086294" description="MAP kinase-activated protein kinase 3">
    <location>
        <begin position="1"/>
        <end position="384"/>
    </location>
</feature>
<feature type="domain" description="Protein kinase" evidence="3">
    <location>
        <begin position="46"/>
        <end position="306"/>
    </location>
</feature>
<feature type="region of interest" description="Disordered" evidence="5">
    <location>
        <begin position="1"/>
        <end position="33"/>
    </location>
</feature>
<feature type="region of interest" description="Autoinhibitory helix" evidence="1">
    <location>
        <begin position="309"/>
        <end position="345"/>
    </location>
</feature>
<feature type="region of interest" description="p38 MAPK-binding site" evidence="1">
    <location>
        <begin position="347"/>
        <end position="371"/>
    </location>
</feature>
<feature type="region of interest" description="Disordered" evidence="5">
    <location>
        <begin position="359"/>
        <end position="384"/>
    </location>
</feature>
<feature type="short sequence motif" description="Nuclear export signal (NES)" evidence="1">
    <location>
        <begin position="337"/>
        <end position="346"/>
    </location>
</feature>
<feature type="short sequence motif" description="Bipartite nuclear localization signal 1" evidence="1">
    <location>
        <begin position="352"/>
        <end position="355"/>
    </location>
</feature>
<feature type="short sequence motif" description="Bipartite nuclear localization signal 2" evidence="1">
    <location>
        <begin position="366"/>
        <end position="370"/>
    </location>
</feature>
<feature type="compositionally biased region" description="Polar residues" evidence="5">
    <location>
        <begin position="372"/>
        <end position="384"/>
    </location>
</feature>
<feature type="active site" description="Proton acceptor" evidence="3 4">
    <location>
        <position position="168"/>
    </location>
</feature>
<feature type="binding site" evidence="3">
    <location>
        <begin position="52"/>
        <end position="60"/>
    </location>
    <ligand>
        <name>ATP</name>
        <dbReference type="ChEBI" id="CHEBI:30616"/>
    </ligand>
</feature>
<feature type="binding site" evidence="3">
    <location>
        <position position="75"/>
    </location>
    <ligand>
        <name>ATP</name>
        <dbReference type="ChEBI" id="CHEBI:30616"/>
    </ligand>
</feature>
<feature type="modified residue" description="N-acetylmethionine" evidence="2">
    <location>
        <position position="1"/>
    </location>
</feature>
<feature type="modified residue" description="Phosphothreonine; by MAPK14" evidence="6 8">
    <location>
        <position position="203"/>
    </location>
</feature>
<feature type="modified residue" description="Phosphoserine; by MAPK14" evidence="1">
    <location>
        <position position="253"/>
    </location>
</feature>
<feature type="modified residue" description="Phosphoserine; by autocatalysis" evidence="1">
    <location>
        <position position="309"/>
    </location>
</feature>
<feature type="modified residue" description="Phosphothreonine; by MAPK14" evidence="1">
    <location>
        <position position="315"/>
    </location>
</feature>
<feature type="splice variant" id="VSP_016386" description="In isoform 2." evidence="11">
    <original>APEVLGPEKYDKSCDMWSLGVIMYILLCGFPPFYSNTG</original>
    <variation>GESFACGLHPHCCRML</variation>
    <location>
        <begin position="212"/>
        <end position="249"/>
    </location>
</feature>
<feature type="splice variant" id="VSP_042175" description="In isoform 3." evidence="12">
    <original>LCGFPPFYSNTGQAISPGMKRRIRLGQYS</original>
    <variation>NPWWSHRPHSTQPECSRKTKITGMTSRKR</variation>
    <location>
        <begin position="238"/>
        <end position="266"/>
    </location>
</feature>
<feature type="splice variant" id="VSP_016387" description="In isoform 2." evidence="11">
    <location>
        <begin position="250"/>
        <end position="384"/>
    </location>
</feature>
<feature type="splice variant" id="VSP_042176" description="In isoform 3." evidence="12">
    <location>
        <begin position="267"/>
        <end position="384"/>
    </location>
</feature>
<feature type="mutagenesis site" description="Prevents degradation of isoform 3." evidence="8">
    <original>T</original>
    <variation>A</variation>
    <location>
        <position position="203"/>
    </location>
</feature>
<feature type="sequence conflict" description="In Ref. 1; BAE25981." evidence="12" ref="1">
    <original>L</original>
    <variation>P</variation>
    <location>
        <position position="216"/>
    </location>
</feature>
<protein>
    <recommendedName>
        <fullName>MAP kinase-activated protein kinase 3</fullName>
        <shortName>MAPK-activated protein kinase 3</shortName>
        <shortName>MAPKAP kinase 3</shortName>
        <shortName>MAPKAP-K3</shortName>
        <shortName>MAPKAPK-3</shortName>
        <shortName>MK-3</shortName>
        <ecNumber>2.7.11.1</ecNumber>
    </recommendedName>
</protein>
<name>MAPK3_MOUSE</name>
<reference key="1">
    <citation type="journal article" date="2005" name="Science">
        <title>The transcriptional landscape of the mammalian genome.</title>
        <authorList>
            <person name="Carninci P."/>
            <person name="Kasukawa T."/>
            <person name="Katayama S."/>
            <person name="Gough J."/>
            <person name="Frith M.C."/>
            <person name="Maeda N."/>
            <person name="Oyama R."/>
            <person name="Ravasi T."/>
            <person name="Lenhard B."/>
            <person name="Wells C."/>
            <person name="Kodzius R."/>
            <person name="Shimokawa K."/>
            <person name="Bajic V.B."/>
            <person name="Brenner S.E."/>
            <person name="Batalov S."/>
            <person name="Forrest A.R."/>
            <person name="Zavolan M."/>
            <person name="Davis M.J."/>
            <person name="Wilming L.G."/>
            <person name="Aidinis V."/>
            <person name="Allen J.E."/>
            <person name="Ambesi-Impiombato A."/>
            <person name="Apweiler R."/>
            <person name="Aturaliya R.N."/>
            <person name="Bailey T.L."/>
            <person name="Bansal M."/>
            <person name="Baxter L."/>
            <person name="Beisel K.W."/>
            <person name="Bersano T."/>
            <person name="Bono H."/>
            <person name="Chalk A.M."/>
            <person name="Chiu K.P."/>
            <person name="Choudhary V."/>
            <person name="Christoffels A."/>
            <person name="Clutterbuck D.R."/>
            <person name="Crowe M.L."/>
            <person name="Dalla E."/>
            <person name="Dalrymple B.P."/>
            <person name="de Bono B."/>
            <person name="Della Gatta G."/>
            <person name="di Bernardo D."/>
            <person name="Down T."/>
            <person name="Engstrom P."/>
            <person name="Fagiolini M."/>
            <person name="Faulkner G."/>
            <person name="Fletcher C.F."/>
            <person name="Fukushima T."/>
            <person name="Furuno M."/>
            <person name="Futaki S."/>
            <person name="Gariboldi M."/>
            <person name="Georgii-Hemming P."/>
            <person name="Gingeras T.R."/>
            <person name="Gojobori T."/>
            <person name="Green R.E."/>
            <person name="Gustincich S."/>
            <person name="Harbers M."/>
            <person name="Hayashi Y."/>
            <person name="Hensch T.K."/>
            <person name="Hirokawa N."/>
            <person name="Hill D."/>
            <person name="Huminiecki L."/>
            <person name="Iacono M."/>
            <person name="Ikeo K."/>
            <person name="Iwama A."/>
            <person name="Ishikawa T."/>
            <person name="Jakt M."/>
            <person name="Kanapin A."/>
            <person name="Katoh M."/>
            <person name="Kawasawa Y."/>
            <person name="Kelso J."/>
            <person name="Kitamura H."/>
            <person name="Kitano H."/>
            <person name="Kollias G."/>
            <person name="Krishnan S.P."/>
            <person name="Kruger A."/>
            <person name="Kummerfeld S.K."/>
            <person name="Kurochkin I.V."/>
            <person name="Lareau L.F."/>
            <person name="Lazarevic D."/>
            <person name="Lipovich L."/>
            <person name="Liu J."/>
            <person name="Liuni S."/>
            <person name="McWilliam S."/>
            <person name="Madan Babu M."/>
            <person name="Madera M."/>
            <person name="Marchionni L."/>
            <person name="Matsuda H."/>
            <person name="Matsuzawa S."/>
            <person name="Miki H."/>
            <person name="Mignone F."/>
            <person name="Miyake S."/>
            <person name="Morris K."/>
            <person name="Mottagui-Tabar S."/>
            <person name="Mulder N."/>
            <person name="Nakano N."/>
            <person name="Nakauchi H."/>
            <person name="Ng P."/>
            <person name="Nilsson R."/>
            <person name="Nishiguchi S."/>
            <person name="Nishikawa S."/>
            <person name="Nori F."/>
            <person name="Ohara O."/>
            <person name="Okazaki Y."/>
            <person name="Orlando V."/>
            <person name="Pang K.C."/>
            <person name="Pavan W.J."/>
            <person name="Pavesi G."/>
            <person name="Pesole G."/>
            <person name="Petrovsky N."/>
            <person name="Piazza S."/>
            <person name="Reed J."/>
            <person name="Reid J.F."/>
            <person name="Ring B.Z."/>
            <person name="Ringwald M."/>
            <person name="Rost B."/>
            <person name="Ruan Y."/>
            <person name="Salzberg S.L."/>
            <person name="Sandelin A."/>
            <person name="Schneider C."/>
            <person name="Schoenbach C."/>
            <person name="Sekiguchi K."/>
            <person name="Semple C.A."/>
            <person name="Seno S."/>
            <person name="Sessa L."/>
            <person name="Sheng Y."/>
            <person name="Shibata Y."/>
            <person name="Shimada H."/>
            <person name="Shimada K."/>
            <person name="Silva D."/>
            <person name="Sinclair B."/>
            <person name="Sperling S."/>
            <person name="Stupka E."/>
            <person name="Sugiura K."/>
            <person name="Sultana R."/>
            <person name="Takenaka Y."/>
            <person name="Taki K."/>
            <person name="Tammoja K."/>
            <person name="Tan S.L."/>
            <person name="Tang S."/>
            <person name="Taylor M.S."/>
            <person name="Tegner J."/>
            <person name="Teichmann S.A."/>
            <person name="Ueda H.R."/>
            <person name="van Nimwegen E."/>
            <person name="Verardo R."/>
            <person name="Wei C.L."/>
            <person name="Yagi K."/>
            <person name="Yamanishi H."/>
            <person name="Zabarovsky E."/>
            <person name="Zhu S."/>
            <person name="Zimmer A."/>
            <person name="Hide W."/>
            <person name="Bult C."/>
            <person name="Grimmond S.M."/>
            <person name="Teasdale R.D."/>
            <person name="Liu E.T."/>
            <person name="Brusic V."/>
            <person name="Quackenbush J."/>
            <person name="Wahlestedt C."/>
            <person name="Mattick J.S."/>
            <person name="Hume D.A."/>
            <person name="Kai C."/>
            <person name="Sasaki D."/>
            <person name="Tomaru Y."/>
            <person name="Fukuda S."/>
            <person name="Kanamori-Katayama M."/>
            <person name="Suzuki M."/>
            <person name="Aoki J."/>
            <person name="Arakawa T."/>
            <person name="Iida J."/>
            <person name="Imamura K."/>
            <person name="Itoh M."/>
            <person name="Kato T."/>
            <person name="Kawaji H."/>
            <person name="Kawagashira N."/>
            <person name="Kawashima T."/>
            <person name="Kojima M."/>
            <person name="Kondo S."/>
            <person name="Konno H."/>
            <person name="Nakano K."/>
            <person name="Ninomiya N."/>
            <person name="Nishio T."/>
            <person name="Okada M."/>
            <person name="Plessy C."/>
            <person name="Shibata K."/>
            <person name="Shiraki T."/>
            <person name="Suzuki S."/>
            <person name="Tagami M."/>
            <person name="Waki K."/>
            <person name="Watahiki A."/>
            <person name="Okamura-Oho Y."/>
            <person name="Suzuki H."/>
            <person name="Kawai J."/>
            <person name="Hayashizaki Y."/>
        </authorList>
    </citation>
    <scope>NUCLEOTIDE SEQUENCE [LARGE SCALE MRNA] (ISOFORMS 1 AND 2)</scope>
    <source>
        <strain>NOD</strain>
        <tissue>Lung</tissue>
        <tissue>Spleen</tissue>
    </source>
</reference>
<reference key="2">
    <citation type="journal article" date="2009" name="PLoS Biol.">
        <title>Lineage-specific biology revealed by a finished genome assembly of the mouse.</title>
        <authorList>
            <person name="Church D.M."/>
            <person name="Goodstadt L."/>
            <person name="Hillier L.W."/>
            <person name="Zody M.C."/>
            <person name="Goldstein S."/>
            <person name="She X."/>
            <person name="Bult C.J."/>
            <person name="Agarwala R."/>
            <person name="Cherry J.L."/>
            <person name="DiCuccio M."/>
            <person name="Hlavina W."/>
            <person name="Kapustin Y."/>
            <person name="Meric P."/>
            <person name="Maglott D."/>
            <person name="Birtle Z."/>
            <person name="Marques A.C."/>
            <person name="Graves T."/>
            <person name="Zhou S."/>
            <person name="Teague B."/>
            <person name="Potamousis K."/>
            <person name="Churas C."/>
            <person name="Place M."/>
            <person name="Herschleb J."/>
            <person name="Runnheim R."/>
            <person name="Forrest D."/>
            <person name="Amos-Landgraf J."/>
            <person name="Schwartz D.C."/>
            <person name="Cheng Z."/>
            <person name="Lindblad-Toh K."/>
            <person name="Eichler E.E."/>
            <person name="Ponting C.P."/>
        </authorList>
    </citation>
    <scope>NUCLEOTIDE SEQUENCE [LARGE SCALE GENOMIC DNA]</scope>
    <source>
        <strain>C57BL/6J</strain>
    </source>
</reference>
<reference key="3">
    <citation type="submission" date="2005-07" db="EMBL/GenBank/DDBJ databases">
        <authorList>
            <person name="Mural R.J."/>
            <person name="Adams M.D."/>
            <person name="Myers E.W."/>
            <person name="Smith H.O."/>
            <person name="Venter J.C."/>
        </authorList>
    </citation>
    <scope>NUCLEOTIDE SEQUENCE [LARGE SCALE GENOMIC DNA]</scope>
</reference>
<reference key="4">
    <citation type="journal article" date="2004" name="Genome Res.">
        <title>The status, quality, and expansion of the NIH full-length cDNA project: the Mammalian Gene Collection (MGC).</title>
        <authorList>
            <consortium name="The MGC Project Team"/>
        </authorList>
    </citation>
    <scope>NUCLEOTIDE SEQUENCE [LARGE SCALE MRNA] (ISOFORM 1)</scope>
    <source>
        <strain>FVB/N</strain>
        <tissue>Salivary gland</tissue>
    </source>
</reference>
<reference key="5">
    <citation type="journal article" date="2007" name="Mol. Cell. Biol.">
        <title>The mitogen-activated protein kinase (MAPK)-activated protein kinases MK2 and MK3 cooperate in stimulation of tumor necrosis factor biosynthesis and stabilization of p38 MAPK.</title>
        <authorList>
            <person name="Ronkina N."/>
            <person name="Kotlyarov A."/>
            <person name="Dittrich-Breiholz O."/>
            <person name="Kracht M."/>
            <person name="Hitti E."/>
            <person name="Milarski K."/>
            <person name="Askew R."/>
            <person name="Marusic S."/>
            <person name="Lin L.L."/>
            <person name="Gaestel M."/>
            <person name="Telliez J.B."/>
        </authorList>
    </citation>
    <scope>DISRUPTION PHENOTYPE</scope>
    <scope>TISSUE SPECIFICITY</scope>
    <scope>PHOSPHORYLATION AT THR-203</scope>
</reference>
<reference key="6">
    <citation type="journal article" date="2007" name="Nat. Immunol.">
        <title>The MAPK-activated kinase Rsk controls an acute Toll-like receptor signaling response in dendritic cells and is activated through two distinct pathways.</title>
        <authorList>
            <person name="Zaru R."/>
            <person name="Ronkina N."/>
            <person name="Gaestel M."/>
            <person name="Arthur J.S."/>
            <person name="Watts C."/>
        </authorList>
    </citation>
    <scope>FUNCTION IN PHOSPHORYLATION OF RPS6KA3</scope>
</reference>
<reference key="7">
    <citation type="journal article" date="2010" name="Cell. Signal.">
        <title>Characterization of a novel MK3 splice variant from murine ventricular myocardium.</title>
        <authorList>
            <person name="Moise N."/>
            <person name="Dingar D."/>
            <person name="Mamarbachi A.M."/>
            <person name="Villeneuve L.R."/>
            <person name="Farhat N."/>
            <person name="Gaestel M."/>
            <person name="Khairallah M."/>
            <person name="Allen B.G."/>
        </authorList>
    </citation>
    <scope>ALTERNATIVE SPLICING (ISOFORM 3)</scope>
    <scope>SUBCELLULAR LOCATION</scope>
    <scope>PHOSPHORYLATION AT THR-203</scope>
    <scope>MUTAGENESIS OF THR-203</scope>
</reference>
<reference key="8">
    <citation type="journal article" date="2010" name="J. Biol. Chem.">
        <title>p38 MAP kinase and MAPKAP kinases MK2/3 cooperatively phosphorylate epithelial keratins.</title>
        <authorList>
            <person name="Menon M.B."/>
            <person name="Schwermann J."/>
            <person name="Singh A.K."/>
            <person name="Franz-Wachtel M."/>
            <person name="Pabst O."/>
            <person name="Seidler U."/>
            <person name="Omary M.B."/>
            <person name="Kotlyarov A."/>
            <person name="Gaestel M."/>
        </authorList>
    </citation>
    <scope>FUNCTION IN PHOSPHORYLATION OF KRT18 AND KRT20</scope>
</reference>
<reference key="9">
    <citation type="journal article" date="2016" name="Hum. Mol. Genet.">
        <title>A dominant mutation in MAPKAPK3, an actor of p38 signaling pathway, causes a new retinal dystrophy involving Bruch's membrane and retinal pigment epithelium.</title>
        <authorList>
            <person name="Meunier I."/>
            <person name="Lenaers G."/>
            <person name="Bocquet B."/>
            <person name="Baudoin C."/>
            <person name="Piro-Megy C."/>
            <person name="Cubizolle A."/>
            <person name="Quiles M."/>
            <person name="Jean-Charles A."/>
            <person name="Cohen S.Y."/>
            <person name="Merle H."/>
            <person name="Gaudric A."/>
            <person name="Labesse G."/>
            <person name="Manes G."/>
            <person name="Pequignot M."/>
            <person name="Cazevieille C."/>
            <person name="Dhaenens C.M."/>
            <person name="Fichard A."/>
            <person name="Ronkina N."/>
            <person name="Arthur S.J."/>
            <person name="Gaestel M."/>
            <person name="Hamel C.P."/>
        </authorList>
    </citation>
    <scope>DISRUPTION PHENOTYPE</scope>
</reference>
<evidence type="ECO:0000250" key="1"/>
<evidence type="ECO:0000250" key="2">
    <source>
        <dbReference type="UniProtKB" id="Q16644"/>
    </source>
</evidence>
<evidence type="ECO:0000255" key="3">
    <source>
        <dbReference type="PROSITE-ProRule" id="PRU00159"/>
    </source>
</evidence>
<evidence type="ECO:0000255" key="4">
    <source>
        <dbReference type="PROSITE-ProRule" id="PRU10027"/>
    </source>
</evidence>
<evidence type="ECO:0000256" key="5">
    <source>
        <dbReference type="SAM" id="MobiDB-lite"/>
    </source>
</evidence>
<evidence type="ECO:0000269" key="6">
    <source>
    </source>
</evidence>
<evidence type="ECO:0000269" key="7">
    <source>
    </source>
</evidence>
<evidence type="ECO:0000269" key="8">
    <source>
    </source>
</evidence>
<evidence type="ECO:0000269" key="9">
    <source>
    </source>
</evidence>
<evidence type="ECO:0000269" key="10">
    <source>
    </source>
</evidence>
<evidence type="ECO:0000303" key="11">
    <source>
    </source>
</evidence>
<evidence type="ECO:0000305" key="12"/>
<gene>
    <name type="primary">Mapkapk3</name>
</gene>
<keyword id="KW-0007">Acetylation</keyword>
<keyword id="KW-0025">Alternative splicing</keyword>
<keyword id="KW-0067">ATP-binding</keyword>
<keyword id="KW-0963">Cytoplasm</keyword>
<keyword id="KW-0418">Kinase</keyword>
<keyword id="KW-0547">Nucleotide-binding</keyword>
<keyword id="KW-0539">Nucleus</keyword>
<keyword id="KW-0597">Phosphoprotein</keyword>
<keyword id="KW-1185">Reference proteome</keyword>
<keyword id="KW-0723">Serine/threonine-protein kinase</keyword>
<keyword id="KW-0808">Transferase</keyword>
<dbReference type="EC" id="2.7.11.1"/>
<dbReference type="EMBL" id="AK087496">
    <property type="protein sequence ID" value="BAC39897.1"/>
    <property type="molecule type" value="mRNA"/>
</dbReference>
<dbReference type="EMBL" id="AK144637">
    <property type="protein sequence ID" value="BAE25981.1"/>
    <property type="molecule type" value="mRNA"/>
</dbReference>
<dbReference type="EMBL" id="AK151881">
    <property type="protein sequence ID" value="BAE30767.1"/>
    <property type="molecule type" value="mRNA"/>
</dbReference>
<dbReference type="EMBL" id="AK172344">
    <property type="protein sequence ID" value="BAE42958.1"/>
    <property type="molecule type" value="mRNA"/>
</dbReference>
<dbReference type="EMBL" id="AK172578">
    <property type="protein sequence ID" value="BAE43076.1"/>
    <property type="molecule type" value="mRNA"/>
</dbReference>
<dbReference type="EMBL" id="AL672070">
    <property type="status" value="NOT_ANNOTATED_CDS"/>
    <property type="molecule type" value="Genomic_DNA"/>
</dbReference>
<dbReference type="EMBL" id="CH466560">
    <property type="protein sequence ID" value="EDL21175.1"/>
    <property type="molecule type" value="Genomic_DNA"/>
</dbReference>
<dbReference type="EMBL" id="BC031467">
    <property type="protein sequence ID" value="AAH31467.1"/>
    <property type="molecule type" value="mRNA"/>
</dbReference>
<dbReference type="CCDS" id="CCDS23487.1">
    <molecule id="Q3UMW7-1"/>
</dbReference>
<dbReference type="CCDS" id="CCDS85722.1">
    <molecule id="Q3UMW7-3"/>
</dbReference>
<dbReference type="RefSeq" id="NP_001303620.1">
    <molecule id="Q3UMW7-3"/>
    <property type="nucleotide sequence ID" value="NM_001316691.2"/>
</dbReference>
<dbReference type="RefSeq" id="NP_001408254.1">
    <molecule id="Q3UMW7-1"/>
    <property type="nucleotide sequence ID" value="NM_001421325.1"/>
</dbReference>
<dbReference type="RefSeq" id="NP_849238.1">
    <molecule id="Q3UMW7-1"/>
    <property type="nucleotide sequence ID" value="NM_178907.4"/>
</dbReference>
<dbReference type="RefSeq" id="XP_006511679.1">
    <property type="nucleotide sequence ID" value="XM_006511616.3"/>
</dbReference>
<dbReference type="SMR" id="Q3UMW7"/>
<dbReference type="BioGRID" id="221912">
    <property type="interactions" value="2"/>
</dbReference>
<dbReference type="FunCoup" id="Q3UMW7">
    <property type="interactions" value="3492"/>
</dbReference>
<dbReference type="STRING" id="10090.ENSMUSP00000035194"/>
<dbReference type="iPTMnet" id="Q3UMW7"/>
<dbReference type="PhosphoSitePlus" id="Q3UMW7"/>
<dbReference type="PaxDb" id="10090-ENSMUSP00000035194"/>
<dbReference type="PeptideAtlas" id="Q3UMW7"/>
<dbReference type="ProteomicsDB" id="292016">
    <molecule id="Q3UMW7-1"/>
</dbReference>
<dbReference type="ProteomicsDB" id="292017">
    <molecule id="Q3UMW7-2"/>
</dbReference>
<dbReference type="ProteomicsDB" id="292018">
    <molecule id="Q3UMW7-3"/>
</dbReference>
<dbReference type="Pumba" id="Q3UMW7"/>
<dbReference type="Antibodypedia" id="30996">
    <property type="antibodies" value="344 antibodies from 35 providers"/>
</dbReference>
<dbReference type="DNASU" id="102626"/>
<dbReference type="Ensembl" id="ENSMUST00000035194.8">
    <molecule id="Q3UMW7-1"/>
    <property type="protein sequence ID" value="ENSMUSP00000035194.3"/>
    <property type="gene ID" value="ENSMUSG00000032577.17"/>
</dbReference>
<dbReference type="Ensembl" id="ENSMUST00000192054.2">
    <molecule id="Q3UMW7-3"/>
    <property type="protein sequence ID" value="ENSMUSP00000141342.2"/>
    <property type="gene ID" value="ENSMUSG00000032577.17"/>
</dbReference>
<dbReference type="GeneID" id="102626"/>
<dbReference type="KEGG" id="mmu:102626"/>
<dbReference type="UCSC" id="uc009rkx.1">
    <molecule id="Q3UMW7-1"/>
    <property type="organism name" value="mouse"/>
</dbReference>
<dbReference type="UCSC" id="uc009rla.1">
    <molecule id="Q3UMW7-2"/>
    <property type="organism name" value="mouse"/>
</dbReference>
<dbReference type="UCSC" id="uc012hab.1">
    <molecule id="Q3UMW7-3"/>
    <property type="organism name" value="mouse"/>
</dbReference>
<dbReference type="AGR" id="MGI:2143163"/>
<dbReference type="CTD" id="7867"/>
<dbReference type="MGI" id="MGI:2143163">
    <property type="gene designation" value="Mapkapk3"/>
</dbReference>
<dbReference type="VEuPathDB" id="HostDB:ENSMUSG00000032577"/>
<dbReference type="eggNOG" id="KOG0604">
    <property type="taxonomic scope" value="Eukaryota"/>
</dbReference>
<dbReference type="GeneTree" id="ENSGT00940000154089"/>
<dbReference type="HOGENOM" id="CLU_000288_63_0_1"/>
<dbReference type="InParanoid" id="Q3UMW7"/>
<dbReference type="OMA" id="PSPEWDC"/>
<dbReference type="OrthoDB" id="40902at2759"/>
<dbReference type="PhylomeDB" id="Q3UMW7"/>
<dbReference type="TreeFam" id="TF312891"/>
<dbReference type="Reactome" id="R-MMU-171007">
    <property type="pathway name" value="p38MAPK events"/>
</dbReference>
<dbReference type="Reactome" id="R-MMU-2559580">
    <property type="pathway name" value="Oxidative Stress Induced Senescence"/>
</dbReference>
<dbReference type="Reactome" id="R-MMU-4420097">
    <property type="pathway name" value="VEGFA-VEGFR2 Pathway"/>
</dbReference>
<dbReference type="Reactome" id="R-MMU-450302">
    <property type="pathway name" value="activated TAK1 mediates p38 MAPK activation"/>
</dbReference>
<dbReference type="BioGRID-ORCS" id="102626">
    <property type="hits" value="2 hits in 82 CRISPR screens"/>
</dbReference>
<dbReference type="PRO" id="PR:Q3UMW7"/>
<dbReference type="Proteomes" id="UP000000589">
    <property type="component" value="Chromosome 9"/>
</dbReference>
<dbReference type="RNAct" id="Q3UMW7">
    <property type="molecule type" value="protein"/>
</dbReference>
<dbReference type="Bgee" id="ENSMUSG00000032577">
    <property type="expression patterns" value="Expressed in hair follicle and 202 other cell types or tissues"/>
</dbReference>
<dbReference type="ExpressionAtlas" id="Q3UMW7">
    <property type="expression patterns" value="baseline and differential"/>
</dbReference>
<dbReference type="GO" id="GO:0005737">
    <property type="term" value="C:cytoplasm"/>
    <property type="evidence" value="ECO:0007669"/>
    <property type="project" value="UniProtKB-SubCell"/>
</dbReference>
<dbReference type="GO" id="GO:0005654">
    <property type="term" value="C:nucleoplasm"/>
    <property type="evidence" value="ECO:0007669"/>
    <property type="project" value="Ensembl"/>
</dbReference>
<dbReference type="GO" id="GO:0005524">
    <property type="term" value="F:ATP binding"/>
    <property type="evidence" value="ECO:0007669"/>
    <property type="project" value="UniProtKB-KW"/>
</dbReference>
<dbReference type="GO" id="GO:0106310">
    <property type="term" value="F:protein serine kinase activity"/>
    <property type="evidence" value="ECO:0007669"/>
    <property type="project" value="RHEA"/>
</dbReference>
<dbReference type="GO" id="GO:0004674">
    <property type="term" value="F:protein serine/threonine kinase activity"/>
    <property type="evidence" value="ECO:0000250"/>
    <property type="project" value="UniProtKB"/>
</dbReference>
<dbReference type="GO" id="GO:0044351">
    <property type="term" value="P:macropinocytosis"/>
    <property type="evidence" value="ECO:0000315"/>
    <property type="project" value="UniProtKB"/>
</dbReference>
<dbReference type="GO" id="GO:0034097">
    <property type="term" value="P:response to cytokine"/>
    <property type="evidence" value="ECO:0000250"/>
    <property type="project" value="UniProtKB"/>
</dbReference>
<dbReference type="GO" id="GO:0032496">
    <property type="term" value="P:response to lipopolysaccharide"/>
    <property type="evidence" value="ECO:0000315"/>
    <property type="project" value="UniProtKB"/>
</dbReference>
<dbReference type="GO" id="GO:0002224">
    <property type="term" value="P:toll-like receptor signaling pathway"/>
    <property type="evidence" value="ECO:0000315"/>
    <property type="project" value="UniProtKB"/>
</dbReference>
<dbReference type="FunFam" id="1.10.510.10:FF:000094">
    <property type="entry name" value="MAP kinase-activated protein kinase 2"/>
    <property type="match status" value="1"/>
</dbReference>
<dbReference type="FunFam" id="3.30.200.20:FF:000156">
    <property type="entry name" value="MAP kinase-activated protein kinase 3"/>
    <property type="match status" value="1"/>
</dbReference>
<dbReference type="FunFam" id="4.10.1170.10:FF:000001">
    <property type="entry name" value="MAP kinase-activated protein kinase 3"/>
    <property type="match status" value="1"/>
</dbReference>
<dbReference type="Gene3D" id="4.10.1170.10">
    <property type="entry name" value="MAP kinase activated protein kinase 2"/>
    <property type="match status" value="1"/>
</dbReference>
<dbReference type="Gene3D" id="3.30.200.20">
    <property type="entry name" value="Phosphorylase Kinase, domain 1"/>
    <property type="match status" value="1"/>
</dbReference>
<dbReference type="Gene3D" id="1.10.510.10">
    <property type="entry name" value="Transferase(Phosphotransferase) domain 1"/>
    <property type="match status" value="1"/>
</dbReference>
<dbReference type="InterPro" id="IPR011009">
    <property type="entry name" value="Kinase-like_dom_sf"/>
</dbReference>
<dbReference type="InterPro" id="IPR027442">
    <property type="entry name" value="MAPKAPK_C"/>
</dbReference>
<dbReference type="InterPro" id="IPR000719">
    <property type="entry name" value="Prot_kinase_dom"/>
</dbReference>
<dbReference type="InterPro" id="IPR017441">
    <property type="entry name" value="Protein_kinase_ATP_BS"/>
</dbReference>
<dbReference type="InterPro" id="IPR008271">
    <property type="entry name" value="Ser/Thr_kinase_AS"/>
</dbReference>
<dbReference type="PANTHER" id="PTHR24347">
    <property type="entry name" value="SERINE/THREONINE-PROTEIN KINASE"/>
    <property type="match status" value="1"/>
</dbReference>
<dbReference type="Pfam" id="PF00069">
    <property type="entry name" value="Pkinase"/>
    <property type="match status" value="1"/>
</dbReference>
<dbReference type="SMART" id="SM00220">
    <property type="entry name" value="S_TKc"/>
    <property type="match status" value="1"/>
</dbReference>
<dbReference type="SUPFAM" id="SSF56112">
    <property type="entry name" value="Protein kinase-like (PK-like)"/>
    <property type="match status" value="1"/>
</dbReference>
<dbReference type="PROSITE" id="PS00107">
    <property type="entry name" value="PROTEIN_KINASE_ATP"/>
    <property type="match status" value="1"/>
</dbReference>
<dbReference type="PROSITE" id="PS50011">
    <property type="entry name" value="PROTEIN_KINASE_DOM"/>
    <property type="match status" value="1"/>
</dbReference>
<dbReference type="PROSITE" id="PS00108">
    <property type="entry name" value="PROTEIN_KINASE_ST"/>
    <property type="match status" value="1"/>
</dbReference>
<sequence>MDGETAGEKGSLVPPPGALGGSALGGAPAPGVRREPKKYAVTDDYQLSKQVLGLGVNGKVLECYHRRSGQKCALKLLYDSPKARQEVDHHWQASGGPHIVRILDVYENMHHGKRCLLIVMECMEGGELFSRIQERGDQAFTEREAAEIMRDIGTAIQFLHSRNIAHRDVKPENLLYTSKEKDAVLKLTDFGFAKETTQNALQTPCYTPYYVAPEVLGPEKYDKSCDMWSLGVIMYILLCGFPPFYSNTGQAISPGMKRRIRLGQYSFPNPEWLDVSEDAKQLIRLLLKTDPTERLTIMQFMNHPWINQSMVVPQTPLYTARVLQEDKDHWDDVKEEMTSALATMRVDYDQVKIKDLKTSNNRLLNKRRKKQAGSSSASQGCNNQ</sequence>
<accession>Q3UMW7</accession>
<accession>B0QZU7</accession>
<accession>E9QNE1</accession>
<accession>Q3T9E6</accession>
<accession>Q8K0G3</accession>
<organism>
    <name type="scientific">Mus musculus</name>
    <name type="common">Mouse</name>
    <dbReference type="NCBI Taxonomy" id="10090"/>
    <lineage>
        <taxon>Eukaryota</taxon>
        <taxon>Metazoa</taxon>
        <taxon>Chordata</taxon>
        <taxon>Craniata</taxon>
        <taxon>Vertebrata</taxon>
        <taxon>Euteleostomi</taxon>
        <taxon>Mammalia</taxon>
        <taxon>Eutheria</taxon>
        <taxon>Euarchontoglires</taxon>
        <taxon>Glires</taxon>
        <taxon>Rodentia</taxon>
        <taxon>Myomorpha</taxon>
        <taxon>Muroidea</taxon>
        <taxon>Muridae</taxon>
        <taxon>Murinae</taxon>
        <taxon>Mus</taxon>
        <taxon>Mus</taxon>
    </lineage>
</organism>
<comment type="function">
    <text evidence="7 9">Stress-activated serine/threonine-protein kinase involved in cytokines production, endocytosis, cell migration, chromatin remodeling and transcriptional regulation. Following stress, it is phosphorylated and activated by MAP kinase p38-alpha/MAPK14, leading to phosphorylation of substrates. Phosphorylates serine in the peptide sequence, Hyd-X-R-X(2)-S, where Hyd is a large hydrophobic residue. MAPKAPK2 and MAPKAPK3, share the same function and substrate specificity, but MAPKAPK3 kinase activity and level in protein expression are lower compared to MAPKAPK2. Phosphorylates HSP27/HSPB1, KRT18, KRT20, RCSD1, RPS6KA3, TAB3 and TTP/ZFP36. Mediates phosphorylation of HSP27/HSPB1 in response to stress, leading to dissociate HSP27/HSPB1 from large small heat-shock protein (sHsps) oligomers and impair their chaperone activities and ability to protect against oxidative stress effectively. Involved in inflammatory response by regulating tumor necrosis factor (TNF) and IL6 production post-transcriptionally: acts by phosphorylating AU-rich elements (AREs)-binding proteins, such as TTP/ZFP36, leading to regulate the stability and translation of TNF and IL6 mRNAs. Phosphorylation of TTP/ZFP36, a major post-transcriptional regulator of TNF, promotes its binding to 14-3-3 proteins and reduces its ARE mRNA affinity leading to inhibition of dependent degradation of ARE-containing transcript. Involved in toll-like receptor signaling pathway (TLR) in dendritic cells: required for acute TLR-induced macropinocytosis by phosphorylating and activating RPS6KA3. Also acts as a modulator of Polycomb-mediated repression.</text>
</comment>
<comment type="catalytic activity">
    <reaction>
        <text>L-seryl-[protein] + ATP = O-phospho-L-seryl-[protein] + ADP + H(+)</text>
        <dbReference type="Rhea" id="RHEA:17989"/>
        <dbReference type="Rhea" id="RHEA-COMP:9863"/>
        <dbReference type="Rhea" id="RHEA-COMP:11604"/>
        <dbReference type="ChEBI" id="CHEBI:15378"/>
        <dbReference type="ChEBI" id="CHEBI:29999"/>
        <dbReference type="ChEBI" id="CHEBI:30616"/>
        <dbReference type="ChEBI" id="CHEBI:83421"/>
        <dbReference type="ChEBI" id="CHEBI:456216"/>
        <dbReference type="EC" id="2.7.11.1"/>
    </reaction>
</comment>
<comment type="catalytic activity">
    <reaction>
        <text>L-threonyl-[protein] + ATP = O-phospho-L-threonyl-[protein] + ADP + H(+)</text>
        <dbReference type="Rhea" id="RHEA:46608"/>
        <dbReference type="Rhea" id="RHEA-COMP:11060"/>
        <dbReference type="Rhea" id="RHEA-COMP:11605"/>
        <dbReference type="ChEBI" id="CHEBI:15378"/>
        <dbReference type="ChEBI" id="CHEBI:30013"/>
        <dbReference type="ChEBI" id="CHEBI:30616"/>
        <dbReference type="ChEBI" id="CHEBI:61977"/>
        <dbReference type="ChEBI" id="CHEBI:456216"/>
        <dbReference type="EC" id="2.7.11.1"/>
    </reaction>
</comment>
<comment type="activity regulation">
    <text evidence="1">Activated following phosphorylation by p38-alpha/MAPK14 following various stresses. Inhibited by ligand 5B (2'-[2-(1,3-benzodioxol-5-yl)pyrimidin-4-yl]-5',6'-dihydrospiro[piperidine-4,7'-pyrrolo[3,2-c]pyridin]- 4'(1'h)-one) and ligand P4O (2-[2-(2-fluorophenyl)pyridin-4-yl]-1,5,6,7-tetrahydro- 4h-pyrrolo[3,2-c]pyridin-4-one), 2 ATP-competitive inhibitors (By similarity).</text>
</comment>
<comment type="subunit">
    <text evidence="1">Heterodimer with p38-alpha/MAPK14. The heterodimer with p38-alpha/MAPK14 forms a stable complex: molecules are positioned 'face to face' so that the ATP-binding sites of both kinases are at the heterodimer interface. Interacts with TCF3 and with polycomb proteins, such as PCH2 and BMI1/PCGF4 (By similarity).</text>
</comment>
<comment type="subcellular location">
    <molecule>Isoform 1</molecule>
    <subcellularLocation>
        <location>Nucleus</location>
    </subcellularLocation>
    <subcellularLocation>
        <location>Cytoplasm</location>
    </subcellularLocation>
    <text>Predominantly located in the nucleus, when activated it translocates to the cytoplasm.</text>
</comment>
<comment type="subcellular location">
    <molecule>Isoform 3</molecule>
    <subcellularLocation>
        <location>Nucleus</location>
    </subcellularLocation>
    <subcellularLocation>
        <location>Cytoplasm</location>
    </subcellularLocation>
    <text>Localizes throughout the cell. Degraded in response to osmotic stress.</text>
</comment>
<comment type="alternative products">
    <event type="alternative splicing"/>
    <isoform>
        <id>Q3UMW7-1</id>
        <name>1</name>
        <sequence type="displayed"/>
    </isoform>
    <isoform>
        <id>Q3UMW7-2</id>
        <name>2</name>
        <sequence type="described" ref="VSP_016386 VSP_016387"/>
    </isoform>
    <isoform>
        <id>Q3UMW7-3</id>
        <name>3</name>
        <name>MK3.2</name>
        <sequence type="described" ref="VSP_042175 VSP_042176"/>
    </isoform>
</comment>
<comment type="tissue specificity">
    <text evidence="6">Ubiquitously expressed (at protein level). Isoform 3 is expressed in skeletal muscles and heart.</text>
</comment>
<comment type="PTM">
    <text evidence="1 6 8">Phosphorylated and activated by MAPK1/ERK2 and MAPK3/ERK1 (By similarity). Phosphorylated and activated by MAP kinase p38-alpha/MAPK14 at Thr-201, Ser-251 and Thr-313. Isoform 3 is degraded following phosphorylation at Thr-203.</text>
</comment>
<comment type="disruption phenotype">
    <text evidence="6 10">No visible phenotype. Mice are fertile and do not exhibit behavioral phenotype. Mice do not show decreased production of inflammatory cytokines such as TNF and IL6 upon LPS-stimulation. Mice lacking both Mapkapk2 and Mapkapk3 show further reduction of TNF production, compared to mice lacking only Mapkapk2. These data suggest that Mapkapk3 may function additively in stress-induced cytokine production. MAPKAPK3 knockdown homozygous mice develop Bruch's membrane abnormal thickening and thinning progressing with age (PubMed:26744326).</text>
</comment>
<comment type="similarity">
    <text evidence="12">Belongs to the protein kinase superfamily. CAMK Ser/Thr protein kinase family.</text>
</comment>
<proteinExistence type="evidence at protein level"/>